<reference key="1">
    <citation type="journal article" date="2006" name="Proc. Natl. Acad. Sci. U.S.A.">
        <title>Comparative genomics of the lactic acid bacteria.</title>
        <authorList>
            <person name="Makarova K.S."/>
            <person name="Slesarev A."/>
            <person name="Wolf Y.I."/>
            <person name="Sorokin A."/>
            <person name="Mirkin B."/>
            <person name="Koonin E.V."/>
            <person name="Pavlov A."/>
            <person name="Pavlova N."/>
            <person name="Karamychev V."/>
            <person name="Polouchine N."/>
            <person name="Shakhova V."/>
            <person name="Grigoriev I."/>
            <person name="Lou Y."/>
            <person name="Rohksar D."/>
            <person name="Lucas S."/>
            <person name="Huang K."/>
            <person name="Goodstein D.M."/>
            <person name="Hawkins T."/>
            <person name="Plengvidhya V."/>
            <person name="Welker D."/>
            <person name="Hughes J."/>
            <person name="Goh Y."/>
            <person name="Benson A."/>
            <person name="Baldwin K."/>
            <person name="Lee J.-H."/>
            <person name="Diaz-Muniz I."/>
            <person name="Dosti B."/>
            <person name="Smeianov V."/>
            <person name="Wechter W."/>
            <person name="Barabote R."/>
            <person name="Lorca G."/>
            <person name="Altermann E."/>
            <person name="Barrangou R."/>
            <person name="Ganesan B."/>
            <person name="Xie Y."/>
            <person name="Rawsthorne H."/>
            <person name="Tamir D."/>
            <person name="Parker C."/>
            <person name="Breidt F."/>
            <person name="Broadbent J.R."/>
            <person name="Hutkins R."/>
            <person name="O'Sullivan D."/>
            <person name="Steele J."/>
            <person name="Unlu G."/>
            <person name="Saier M.H. Jr."/>
            <person name="Klaenhammer T."/>
            <person name="Richardson P."/>
            <person name="Kozyavkin S."/>
            <person name="Weimer B.C."/>
            <person name="Mills D.A."/>
        </authorList>
    </citation>
    <scope>NUCLEOTIDE SEQUENCE [LARGE SCALE GENOMIC DNA]</scope>
    <source>
        <strain>ATCC BAA-491 / LMD-9</strain>
    </source>
</reference>
<dbReference type="EC" id="6.1.1.14" evidence="1"/>
<dbReference type="EMBL" id="CP000419">
    <property type="protein sequence ID" value="ABJ65815.1"/>
    <property type="molecule type" value="Genomic_DNA"/>
</dbReference>
<dbReference type="RefSeq" id="WP_002949990.1">
    <property type="nucleotide sequence ID" value="NZ_CP086001.1"/>
</dbReference>
<dbReference type="SMR" id="Q03LV7"/>
<dbReference type="GeneID" id="66898412"/>
<dbReference type="KEGG" id="ste:STER_0539"/>
<dbReference type="HOGENOM" id="CLU_057066_1_0_9"/>
<dbReference type="GO" id="GO:0005829">
    <property type="term" value="C:cytosol"/>
    <property type="evidence" value="ECO:0007669"/>
    <property type="project" value="TreeGrafter"/>
</dbReference>
<dbReference type="GO" id="GO:0005524">
    <property type="term" value="F:ATP binding"/>
    <property type="evidence" value="ECO:0007669"/>
    <property type="project" value="UniProtKB-UniRule"/>
</dbReference>
<dbReference type="GO" id="GO:0140096">
    <property type="term" value="F:catalytic activity, acting on a protein"/>
    <property type="evidence" value="ECO:0007669"/>
    <property type="project" value="UniProtKB-ARBA"/>
</dbReference>
<dbReference type="GO" id="GO:0004820">
    <property type="term" value="F:glycine-tRNA ligase activity"/>
    <property type="evidence" value="ECO:0007669"/>
    <property type="project" value="UniProtKB-UniRule"/>
</dbReference>
<dbReference type="GO" id="GO:0016740">
    <property type="term" value="F:transferase activity"/>
    <property type="evidence" value="ECO:0007669"/>
    <property type="project" value="UniProtKB-ARBA"/>
</dbReference>
<dbReference type="GO" id="GO:0006426">
    <property type="term" value="P:glycyl-tRNA aminoacylation"/>
    <property type="evidence" value="ECO:0007669"/>
    <property type="project" value="UniProtKB-UniRule"/>
</dbReference>
<dbReference type="CDD" id="cd00733">
    <property type="entry name" value="GlyRS_alpha_core"/>
    <property type="match status" value="1"/>
</dbReference>
<dbReference type="FunFam" id="3.30.930.10:FF:000006">
    <property type="entry name" value="Glycine--tRNA ligase alpha subunit"/>
    <property type="match status" value="1"/>
</dbReference>
<dbReference type="Gene3D" id="3.30.930.10">
    <property type="entry name" value="Bira Bifunctional Protein, Domain 2"/>
    <property type="match status" value="1"/>
</dbReference>
<dbReference type="Gene3D" id="1.20.58.180">
    <property type="entry name" value="Class II aaRS and biotin synthetases, domain 2"/>
    <property type="match status" value="1"/>
</dbReference>
<dbReference type="HAMAP" id="MF_00254">
    <property type="entry name" value="Gly_tRNA_synth_alpha"/>
    <property type="match status" value="1"/>
</dbReference>
<dbReference type="InterPro" id="IPR045864">
    <property type="entry name" value="aa-tRNA-synth_II/BPL/LPL"/>
</dbReference>
<dbReference type="InterPro" id="IPR006194">
    <property type="entry name" value="Gly-tRNA-synth_heterodimer"/>
</dbReference>
<dbReference type="InterPro" id="IPR002310">
    <property type="entry name" value="Gly-tRNA_ligase_asu"/>
</dbReference>
<dbReference type="NCBIfam" id="TIGR00388">
    <property type="entry name" value="glyQ"/>
    <property type="match status" value="1"/>
</dbReference>
<dbReference type="NCBIfam" id="NF006827">
    <property type="entry name" value="PRK09348.1"/>
    <property type="match status" value="1"/>
</dbReference>
<dbReference type="PANTHER" id="PTHR30075:SF2">
    <property type="entry name" value="GLYCINE--TRNA LIGASE, CHLOROPLASTIC_MITOCHONDRIAL 2"/>
    <property type="match status" value="1"/>
</dbReference>
<dbReference type="PANTHER" id="PTHR30075">
    <property type="entry name" value="GLYCYL-TRNA SYNTHETASE"/>
    <property type="match status" value="1"/>
</dbReference>
<dbReference type="Pfam" id="PF02091">
    <property type="entry name" value="tRNA-synt_2e"/>
    <property type="match status" value="1"/>
</dbReference>
<dbReference type="PRINTS" id="PR01044">
    <property type="entry name" value="TRNASYNTHGA"/>
</dbReference>
<dbReference type="SUPFAM" id="SSF55681">
    <property type="entry name" value="Class II aaRS and biotin synthetases"/>
    <property type="match status" value="1"/>
</dbReference>
<dbReference type="PROSITE" id="PS50861">
    <property type="entry name" value="AA_TRNA_LIGASE_II_GLYAB"/>
    <property type="match status" value="1"/>
</dbReference>
<sequence length="305" mass="34903">MSKKLTFQEIILTLQQYWNDQGCMLMQAYDNEKGAGTMSPYTFLRAIGPEPWNAAYVEPSRRPADGRYGENPNRLYQHHQFQVVMKPSPSNIQELYLESLEKLGINPLEHDVRFVEDNWENPSTGSAGLGWEVWLDGMEITQFTYFQQVGGLATGPVTAEVTYGLERLASYIQEVDSVYDIEWAPGVKYGEIFLQPEYEHSKYSFEVSDQDMLLENFEKFEKEAGRALELGLVHPAYDYVLKCSHTFNLLDARGAVSVTERAGYIARIRNLARVVAKTFVAERKKLGYPLLDEATRKKLLAEEEE</sequence>
<protein>
    <recommendedName>
        <fullName evidence="1">Glycine--tRNA ligase alpha subunit</fullName>
        <ecNumber evidence="1">6.1.1.14</ecNumber>
    </recommendedName>
    <alternativeName>
        <fullName evidence="1">Glycyl-tRNA synthetase alpha subunit</fullName>
        <shortName evidence="1">GlyRS</shortName>
    </alternativeName>
</protein>
<gene>
    <name evidence="1" type="primary">glyQ</name>
    <name type="ordered locus">STER_0539</name>
</gene>
<organism>
    <name type="scientific">Streptococcus thermophilus (strain ATCC BAA-491 / LMD-9)</name>
    <dbReference type="NCBI Taxonomy" id="322159"/>
    <lineage>
        <taxon>Bacteria</taxon>
        <taxon>Bacillati</taxon>
        <taxon>Bacillota</taxon>
        <taxon>Bacilli</taxon>
        <taxon>Lactobacillales</taxon>
        <taxon>Streptococcaceae</taxon>
        <taxon>Streptococcus</taxon>
    </lineage>
</organism>
<accession>Q03LV7</accession>
<comment type="catalytic activity">
    <reaction evidence="1">
        <text>tRNA(Gly) + glycine + ATP = glycyl-tRNA(Gly) + AMP + diphosphate</text>
        <dbReference type="Rhea" id="RHEA:16013"/>
        <dbReference type="Rhea" id="RHEA-COMP:9664"/>
        <dbReference type="Rhea" id="RHEA-COMP:9683"/>
        <dbReference type="ChEBI" id="CHEBI:30616"/>
        <dbReference type="ChEBI" id="CHEBI:33019"/>
        <dbReference type="ChEBI" id="CHEBI:57305"/>
        <dbReference type="ChEBI" id="CHEBI:78442"/>
        <dbReference type="ChEBI" id="CHEBI:78522"/>
        <dbReference type="ChEBI" id="CHEBI:456215"/>
        <dbReference type="EC" id="6.1.1.14"/>
    </reaction>
</comment>
<comment type="subunit">
    <text evidence="1">Tetramer of two alpha and two beta subunits.</text>
</comment>
<comment type="subcellular location">
    <subcellularLocation>
        <location evidence="1">Cytoplasm</location>
    </subcellularLocation>
</comment>
<comment type="similarity">
    <text evidence="1">Belongs to the class-II aminoacyl-tRNA synthetase family.</text>
</comment>
<keyword id="KW-0030">Aminoacyl-tRNA synthetase</keyword>
<keyword id="KW-0067">ATP-binding</keyword>
<keyword id="KW-0963">Cytoplasm</keyword>
<keyword id="KW-0436">Ligase</keyword>
<keyword id="KW-0547">Nucleotide-binding</keyword>
<keyword id="KW-0648">Protein biosynthesis</keyword>
<name>SYGA_STRTD</name>
<proteinExistence type="inferred from homology"/>
<feature type="chain" id="PRO_1000047511" description="Glycine--tRNA ligase alpha subunit">
    <location>
        <begin position="1"/>
        <end position="305"/>
    </location>
</feature>
<evidence type="ECO:0000255" key="1">
    <source>
        <dbReference type="HAMAP-Rule" id="MF_00254"/>
    </source>
</evidence>